<comment type="catalytic activity">
    <reaction evidence="1">
        <text>urea + 2 H2O + H(+) = hydrogencarbonate + 2 NH4(+)</text>
        <dbReference type="Rhea" id="RHEA:20557"/>
        <dbReference type="ChEBI" id="CHEBI:15377"/>
        <dbReference type="ChEBI" id="CHEBI:15378"/>
        <dbReference type="ChEBI" id="CHEBI:16199"/>
        <dbReference type="ChEBI" id="CHEBI:17544"/>
        <dbReference type="ChEBI" id="CHEBI:28938"/>
        <dbReference type="EC" id="3.5.1.5"/>
    </reaction>
</comment>
<comment type="pathway">
    <text evidence="1">Nitrogen metabolism; urea degradation; CO(2) and NH(3) from urea (urease route): step 1/1.</text>
</comment>
<comment type="subunit">
    <text evidence="1">Heterotrimer of UreA (gamma), UreB (beta) and UreC (alpha) subunits. Three heterotrimers associate to form the active enzyme.</text>
</comment>
<comment type="subcellular location">
    <subcellularLocation>
        <location evidence="1">Cytoplasm</location>
    </subcellularLocation>
</comment>
<comment type="similarity">
    <text evidence="1">Belongs to the urease beta subunit family.</text>
</comment>
<keyword id="KW-0963">Cytoplasm</keyword>
<keyword id="KW-0378">Hydrolase</keyword>
<keyword id="KW-1185">Reference proteome</keyword>
<reference key="1">
    <citation type="journal article" date="2007" name="PLoS Genet.">
        <title>Patterns and implications of gene gain and loss in the evolution of Prochlorococcus.</title>
        <authorList>
            <person name="Kettler G.C."/>
            <person name="Martiny A.C."/>
            <person name="Huang K."/>
            <person name="Zucker J."/>
            <person name="Coleman M.L."/>
            <person name="Rodrigue S."/>
            <person name="Chen F."/>
            <person name="Lapidus A."/>
            <person name="Ferriera S."/>
            <person name="Johnson J."/>
            <person name="Steglich C."/>
            <person name="Church G.M."/>
            <person name="Richardson P."/>
            <person name="Chisholm S.W."/>
        </authorList>
    </citation>
    <scope>NUCLEOTIDE SEQUENCE [LARGE SCALE GENOMIC DNA]</scope>
    <source>
        <strain>NATL2A</strain>
    </source>
</reference>
<name>URE2_PROMT</name>
<dbReference type="EC" id="3.5.1.5" evidence="1"/>
<dbReference type="EMBL" id="CP000095">
    <property type="protein sequence ID" value="AAZ58544.1"/>
    <property type="molecule type" value="Genomic_DNA"/>
</dbReference>
<dbReference type="RefSeq" id="WP_011295399.1">
    <property type="nucleotide sequence ID" value="NC_007335.2"/>
</dbReference>
<dbReference type="SMR" id="Q46IY4"/>
<dbReference type="STRING" id="59920.PMN2A_1054"/>
<dbReference type="KEGG" id="pmn:PMN2A_1054"/>
<dbReference type="HOGENOM" id="CLU_129707_1_1_3"/>
<dbReference type="OrthoDB" id="9797217at2"/>
<dbReference type="PhylomeDB" id="Q46IY4"/>
<dbReference type="UniPathway" id="UPA00258">
    <property type="reaction ID" value="UER00370"/>
</dbReference>
<dbReference type="Proteomes" id="UP000002535">
    <property type="component" value="Chromosome"/>
</dbReference>
<dbReference type="GO" id="GO:0035550">
    <property type="term" value="C:urease complex"/>
    <property type="evidence" value="ECO:0007669"/>
    <property type="project" value="InterPro"/>
</dbReference>
<dbReference type="GO" id="GO:0009039">
    <property type="term" value="F:urease activity"/>
    <property type="evidence" value="ECO:0007669"/>
    <property type="project" value="UniProtKB-UniRule"/>
</dbReference>
<dbReference type="GO" id="GO:0043419">
    <property type="term" value="P:urea catabolic process"/>
    <property type="evidence" value="ECO:0007669"/>
    <property type="project" value="UniProtKB-UniRule"/>
</dbReference>
<dbReference type="CDD" id="cd00407">
    <property type="entry name" value="Urease_beta"/>
    <property type="match status" value="1"/>
</dbReference>
<dbReference type="FunFam" id="2.10.150.10:FF:000001">
    <property type="entry name" value="Urease subunit beta"/>
    <property type="match status" value="1"/>
</dbReference>
<dbReference type="Gene3D" id="2.10.150.10">
    <property type="entry name" value="Urease, beta subunit"/>
    <property type="match status" value="1"/>
</dbReference>
<dbReference type="HAMAP" id="MF_01954">
    <property type="entry name" value="Urease_beta"/>
    <property type="match status" value="1"/>
</dbReference>
<dbReference type="InterPro" id="IPR002019">
    <property type="entry name" value="Urease_beta-like"/>
</dbReference>
<dbReference type="InterPro" id="IPR036461">
    <property type="entry name" value="Urease_betasu_sf"/>
</dbReference>
<dbReference type="InterPro" id="IPR050069">
    <property type="entry name" value="Urease_subunit"/>
</dbReference>
<dbReference type="NCBIfam" id="NF009682">
    <property type="entry name" value="PRK13203.1"/>
    <property type="match status" value="1"/>
</dbReference>
<dbReference type="NCBIfam" id="TIGR00192">
    <property type="entry name" value="urease_beta"/>
    <property type="match status" value="1"/>
</dbReference>
<dbReference type="PANTHER" id="PTHR33569">
    <property type="entry name" value="UREASE"/>
    <property type="match status" value="1"/>
</dbReference>
<dbReference type="PANTHER" id="PTHR33569:SF1">
    <property type="entry name" value="UREASE"/>
    <property type="match status" value="1"/>
</dbReference>
<dbReference type="Pfam" id="PF00699">
    <property type="entry name" value="Urease_beta"/>
    <property type="match status" value="1"/>
</dbReference>
<dbReference type="SUPFAM" id="SSF51278">
    <property type="entry name" value="Urease, beta-subunit"/>
    <property type="match status" value="1"/>
</dbReference>
<evidence type="ECO:0000255" key="1">
    <source>
        <dbReference type="HAMAP-Rule" id="MF_01954"/>
    </source>
</evidence>
<feature type="chain" id="PRO_0000234257" description="Urease subunit beta">
    <location>
        <begin position="1"/>
        <end position="106"/>
    </location>
</feature>
<protein>
    <recommendedName>
        <fullName evidence="1">Urease subunit beta</fullName>
        <ecNumber evidence="1">3.5.1.5</ecNumber>
    </recommendedName>
    <alternativeName>
        <fullName evidence="1">Urea amidohydrolase subunit beta</fullName>
    </alternativeName>
</protein>
<accession>Q46IY4</accession>
<gene>
    <name evidence="1" type="primary">ureB</name>
    <name type="ordered locus">PMN2A_1054</name>
</gene>
<sequence length="106" mass="11938">MSYLIPGELIPEDGFIELNKGRETTTLKVANTSDRPIQIGSHYHFFESNKGLEFDRKKSLGKRLDIPAGTAIRFEPGDQREVNLVPYAGDRKIFGFNGLINNSLQQ</sequence>
<organism>
    <name type="scientific">Prochlorococcus marinus (strain NATL2A)</name>
    <dbReference type="NCBI Taxonomy" id="59920"/>
    <lineage>
        <taxon>Bacteria</taxon>
        <taxon>Bacillati</taxon>
        <taxon>Cyanobacteriota</taxon>
        <taxon>Cyanophyceae</taxon>
        <taxon>Synechococcales</taxon>
        <taxon>Prochlorococcaceae</taxon>
        <taxon>Prochlorococcus</taxon>
    </lineage>
</organism>
<proteinExistence type="inferred from homology"/>